<feature type="chain" id="PRO_0000115327" description="Tripartite terminase subunit 2">
    <location>
        <begin position="1"/>
        <end position="157"/>
    </location>
</feature>
<feature type="region of interest" description="Disordered" evidence="2">
    <location>
        <begin position="1"/>
        <end position="69"/>
    </location>
</feature>
<feature type="compositionally biased region" description="Acidic residues" evidence="2">
    <location>
        <begin position="11"/>
        <end position="27"/>
    </location>
</feature>
<dbReference type="EMBL" id="M17209">
    <property type="protein sequence ID" value="AAA46005.1"/>
    <property type="molecule type" value="Genomic_DNA"/>
</dbReference>
<dbReference type="EMBL" id="X17403">
    <property type="protein sequence ID" value="CAA35410.1"/>
    <property type="molecule type" value="Genomic_DNA"/>
</dbReference>
<dbReference type="EMBL" id="BK000394">
    <property type="protein sequence ID" value="DAA00156.1"/>
    <property type="molecule type" value="Genomic_DNA"/>
</dbReference>
<dbReference type="PIR" id="S09814">
    <property type="entry name" value="S09814"/>
</dbReference>
<dbReference type="SMR" id="P16792"/>
<dbReference type="ChEMBL" id="CHEMBL3991482"/>
<dbReference type="Proteomes" id="UP000008991">
    <property type="component" value="Segment"/>
</dbReference>
<dbReference type="Proteomes" id="UP000008992">
    <property type="component" value="Segment"/>
</dbReference>
<dbReference type="GO" id="GO:0042025">
    <property type="term" value="C:host cell nucleus"/>
    <property type="evidence" value="ECO:0007669"/>
    <property type="project" value="UniProtKB-SubCell"/>
</dbReference>
<dbReference type="GO" id="GO:0019073">
    <property type="term" value="P:viral DNA genome packaging"/>
    <property type="evidence" value="ECO:0000315"/>
    <property type="project" value="CACAO"/>
</dbReference>
<dbReference type="HAMAP" id="MF_04015">
    <property type="entry name" value="HSV_TRM2"/>
    <property type="match status" value="1"/>
</dbReference>
<dbReference type="InterPro" id="IPR005208">
    <property type="entry name" value="Herpes_TT2"/>
</dbReference>
<dbReference type="Pfam" id="PF03581">
    <property type="entry name" value="Herpes_UL33"/>
    <property type="match status" value="1"/>
</dbReference>
<comment type="function">
    <text evidence="1">Component of the molecular motor that translocates viral genomic DNA in empty capsid during DNA packaging. Forms a tripartite terminase complex together with TRM1 and TRM3 in the host cytoplasm. Once the complex reaches the host nucleus, it interacts with the capsid portal vertex. This portal forms a ring in which genomic DNA is translocated into the capsid.</text>
</comment>
<comment type="subunit">
    <text evidence="1">Associates with TRM1 and TRM3 to form the tripartite terminase complex.</text>
</comment>
<comment type="subcellular location">
    <subcellularLocation>
        <location evidence="1">Host nucleus</location>
    </subcellularLocation>
    <text evidence="1">Found associated with the external surface of the viral capsid during assembly and DNA packaging, but seems absent in extracellular mature virions.</text>
</comment>
<comment type="similarity">
    <text evidence="1">Belongs to the herpesviridae TRM2 protein family.</text>
</comment>
<proteinExistence type="inferred from homology"/>
<organismHost>
    <name type="scientific">Homo sapiens</name>
    <name type="common">Human</name>
    <dbReference type="NCBI Taxonomy" id="9606"/>
</organismHost>
<sequence>MSWAKQRVPFLDDDDGEEENDVQDDVDSPVPTRPLVIDEDAEPAAGTSGGLEGGGGDDEDGEDGHALPDLDDDLLLQFEPMLPRVYDLLLPSLDARLNFVNAGQKYAAFLKYVHGDCATCSHGEILREKTQLLTAIVSKLMDINGILEGKDESAPGK</sequence>
<evidence type="ECO:0000255" key="1">
    <source>
        <dbReference type="HAMAP-Rule" id="MF_04015"/>
    </source>
</evidence>
<evidence type="ECO:0000256" key="2">
    <source>
        <dbReference type="SAM" id="MobiDB-lite"/>
    </source>
</evidence>
<accession>P16792</accession>
<accession>Q7M6N2</accession>
<keyword id="KW-1048">Host nucleus</keyword>
<keyword id="KW-1185">Reference proteome</keyword>
<keyword id="KW-0231">Viral genome packaging</keyword>
<keyword id="KW-1188">Viral release from host cell</keyword>
<gene>
    <name evidence="1" type="primary">TRM2</name>
    <name type="ordered locus">UL51</name>
</gene>
<name>TRM2_HCMVA</name>
<protein>
    <recommendedName>
        <fullName evidence="1">Tripartite terminase subunit 2</fullName>
    </recommendedName>
</protein>
<reference key="1">
    <citation type="journal article" date="1987" name="Virology">
        <title>Large-scale rearrangement of homologous regions in the genomes of HCMV and EBV.</title>
        <authorList>
            <person name="Kouzarides T."/>
            <person name="Bankier A.T."/>
            <person name="Satchwell S.C."/>
            <person name="Weston K.M."/>
            <person name="Tomlinson P."/>
            <person name="Barrell B.G."/>
        </authorList>
    </citation>
    <scope>NUCLEOTIDE SEQUENCE [GENOMIC DNA]</scope>
</reference>
<reference key="2">
    <citation type="journal article" date="1990" name="Curr. Top. Microbiol. Immunol.">
        <title>Analysis of the protein-coding content of the sequence of human cytomegalovirus strain AD169.</title>
        <authorList>
            <person name="Chee M.S."/>
            <person name="Bankier A.T."/>
            <person name="Beck S."/>
            <person name="Bohni R."/>
            <person name="Brown C.M."/>
            <person name="Cerny R."/>
            <person name="Horsnell T."/>
            <person name="Hutchison C.A. III"/>
            <person name="Kouzarides T."/>
            <person name="Martignetti J.A."/>
            <person name="Preddie E."/>
            <person name="Satchwell S.C."/>
            <person name="Tomlinson P."/>
            <person name="Weston K.M."/>
            <person name="Barrell B.G."/>
        </authorList>
    </citation>
    <scope>NUCLEOTIDE SEQUENCE [LARGE SCALE GENOMIC DNA]</scope>
</reference>
<reference key="3">
    <citation type="journal article" date="2003" name="J. Gen. Virol.">
        <title>The human cytomegalovirus genome revisited: comparison with the chimpanzee cytomegalovirus genome.</title>
        <authorList>
            <person name="Davison A.J."/>
            <person name="Dolan A."/>
            <person name="Akter P."/>
            <person name="Addison C."/>
            <person name="Dargan D.J."/>
            <person name="Alcendor D.J."/>
            <person name="McGeoch D.J."/>
            <person name="Hayward G.S."/>
        </authorList>
    </citation>
    <scope>GENOME REANNOTATION</scope>
</reference>
<reference key="4">
    <citation type="journal article" date="2003" name="J. Gen. Virol.">
        <authorList>
            <person name="Davison A.J."/>
            <person name="Dolan A."/>
            <person name="Akter P."/>
            <person name="Addison C."/>
            <person name="Dargan D.J."/>
            <person name="Alcendor D.J."/>
            <person name="McGeoch D.J."/>
            <person name="Hayward G.S."/>
        </authorList>
    </citation>
    <scope>ERRATUM OF PUBMED:12533697</scope>
</reference>
<reference key="5">
    <citation type="journal article" date="2004" name="J. Virol.">
        <title>Identification of proteins in human cytomegalovirus (HCMV) particles: the HCMV proteome.</title>
        <authorList>
            <person name="Varnum S.M."/>
            <person name="Streblow D.N."/>
            <person name="Monroe M.E."/>
            <person name="Smith P."/>
            <person name="Auberry K.J."/>
            <person name="Pasa-Tolic L."/>
            <person name="Wang D."/>
            <person name="Camp D.G. II"/>
            <person name="Rodland K."/>
            <person name="Wiley S."/>
            <person name="Britt W."/>
            <person name="Shenk T."/>
            <person name="Smith R.D."/>
            <person name="Nelson J.A."/>
        </authorList>
    </citation>
    <scope>IDENTIFICATION</scope>
</reference>
<reference key="6">
    <citation type="journal article" date="2004" name="J. Virol.">
        <authorList>
            <person name="Varnum S.M."/>
            <person name="Streblow D.N."/>
            <person name="Monroe M.E."/>
            <person name="Smith P."/>
            <person name="Auberry K.J."/>
            <person name="Pasa-Tolic L."/>
            <person name="Wang D."/>
            <person name="Camp D.G. II"/>
            <person name="Rodland K."/>
            <person name="Wiley S."/>
            <person name="Britt W."/>
            <person name="Shenk T."/>
            <person name="Smith R.D."/>
            <person name="Nelson J.A."/>
        </authorList>
    </citation>
    <scope>ERRATUM OF PUBMED:15452216</scope>
</reference>
<organism>
    <name type="scientific">Human cytomegalovirus (strain AD169)</name>
    <name type="common">HHV-5</name>
    <name type="synonym">Human herpesvirus 5</name>
    <dbReference type="NCBI Taxonomy" id="10360"/>
    <lineage>
        <taxon>Viruses</taxon>
        <taxon>Duplodnaviria</taxon>
        <taxon>Heunggongvirae</taxon>
        <taxon>Peploviricota</taxon>
        <taxon>Herviviricetes</taxon>
        <taxon>Herpesvirales</taxon>
        <taxon>Orthoherpesviridae</taxon>
        <taxon>Betaherpesvirinae</taxon>
        <taxon>Cytomegalovirus</taxon>
        <taxon>Cytomegalovirus humanbeta5</taxon>
        <taxon>Human cytomegalovirus</taxon>
    </lineage>
</organism>